<name>FRDD_SHISS</name>
<evidence type="ECO:0000255" key="1">
    <source>
        <dbReference type="HAMAP-Rule" id="MF_00709"/>
    </source>
</evidence>
<feature type="chain" id="PRO_1000045562" description="Fumarate reductase subunit D">
    <location>
        <begin position="1"/>
        <end position="119"/>
    </location>
</feature>
<feature type="transmembrane region" description="Helical" evidence="1">
    <location>
        <begin position="26"/>
        <end position="46"/>
    </location>
</feature>
<feature type="transmembrane region" description="Helical" evidence="1">
    <location>
        <begin position="55"/>
        <end position="75"/>
    </location>
</feature>
<feature type="transmembrane region" description="Helical" evidence="1">
    <location>
        <begin position="99"/>
        <end position="119"/>
    </location>
</feature>
<keyword id="KW-0997">Cell inner membrane</keyword>
<keyword id="KW-1003">Cell membrane</keyword>
<keyword id="KW-0472">Membrane</keyword>
<keyword id="KW-1185">Reference proteome</keyword>
<keyword id="KW-0812">Transmembrane</keyword>
<keyword id="KW-1133">Transmembrane helix</keyword>
<organism>
    <name type="scientific">Shigella sonnei (strain Ss046)</name>
    <dbReference type="NCBI Taxonomy" id="300269"/>
    <lineage>
        <taxon>Bacteria</taxon>
        <taxon>Pseudomonadati</taxon>
        <taxon>Pseudomonadota</taxon>
        <taxon>Gammaproteobacteria</taxon>
        <taxon>Enterobacterales</taxon>
        <taxon>Enterobacteriaceae</taxon>
        <taxon>Shigella</taxon>
    </lineage>
</organism>
<comment type="function">
    <text evidence="1">Two distinct, membrane-bound, FAD-containing enzymes are responsible for the catalysis of fumarate and succinate interconversion; fumarate reductase is used in anaerobic growth, and succinate dehydrogenase is used in aerobic growth. Anchors the catalytic components of the fumarate reductase complex to the cell inner membrane, binds quinones.</text>
</comment>
<comment type="subunit">
    <text evidence="1">Part of an enzyme complex containing four subunits: a flavoprotein (FrdA), an iron-sulfur protein (FrdB), and two hydrophobic anchor proteins (FrdC and FrdD).</text>
</comment>
<comment type="subcellular location">
    <subcellularLocation>
        <location evidence="1">Cell inner membrane</location>
        <topology evidence="1">Multi-pass membrane protein</topology>
    </subcellularLocation>
</comment>
<comment type="similarity">
    <text evidence="1">Belongs to the FrdD family.</text>
</comment>
<sequence>MINPNPKRSDEPVFWGLFGAGGMWSAIIAPVMILLVGILLPLGLFPGDALSYERVLAFAQSFIGRVFLFLMIVLPLWCGLHRMHHAMHDLKIHVPAGKWVFYGLAAILTVVTLIGIVTI</sequence>
<dbReference type="EMBL" id="CP000038">
    <property type="protein sequence ID" value="AAZ90825.1"/>
    <property type="molecule type" value="Genomic_DNA"/>
</dbReference>
<dbReference type="RefSeq" id="WP_001299198.1">
    <property type="nucleotide sequence ID" value="NC_007384.1"/>
</dbReference>
<dbReference type="SMR" id="Q3YUI7"/>
<dbReference type="GeneID" id="93777671"/>
<dbReference type="KEGG" id="ssn:SSON_4337"/>
<dbReference type="HOGENOM" id="CLU_168367_0_0_6"/>
<dbReference type="Proteomes" id="UP000002529">
    <property type="component" value="Chromosome"/>
</dbReference>
<dbReference type="GO" id="GO:0045283">
    <property type="term" value="C:fumarate reductase complex"/>
    <property type="evidence" value="ECO:0007669"/>
    <property type="project" value="UniProtKB-UniRule"/>
</dbReference>
<dbReference type="GO" id="GO:0005886">
    <property type="term" value="C:plasma membrane"/>
    <property type="evidence" value="ECO:0007669"/>
    <property type="project" value="UniProtKB-SubCell"/>
</dbReference>
<dbReference type="GO" id="GO:0000104">
    <property type="term" value="F:succinate dehydrogenase activity"/>
    <property type="evidence" value="ECO:0007669"/>
    <property type="project" value="UniProtKB-UniRule"/>
</dbReference>
<dbReference type="GO" id="GO:0006106">
    <property type="term" value="P:fumarate metabolic process"/>
    <property type="evidence" value="ECO:0007669"/>
    <property type="project" value="InterPro"/>
</dbReference>
<dbReference type="CDD" id="cd00547">
    <property type="entry name" value="QFR_TypeD_subunitD"/>
    <property type="match status" value="1"/>
</dbReference>
<dbReference type="FunFam" id="1.20.1300.10:FF:000002">
    <property type="entry name" value="Fumarate reductase subunit D"/>
    <property type="match status" value="1"/>
</dbReference>
<dbReference type="Gene3D" id="1.20.1300.10">
    <property type="entry name" value="Fumarate reductase/succinate dehydrogenase, transmembrane subunit"/>
    <property type="match status" value="1"/>
</dbReference>
<dbReference type="HAMAP" id="MF_00709">
    <property type="entry name" value="Fumarate_red_D"/>
    <property type="match status" value="1"/>
</dbReference>
<dbReference type="InterPro" id="IPR003418">
    <property type="entry name" value="Fumarate_red_D"/>
</dbReference>
<dbReference type="InterPro" id="IPR034804">
    <property type="entry name" value="SQR/QFR_C/D"/>
</dbReference>
<dbReference type="NCBIfam" id="NF003977">
    <property type="entry name" value="PRK05470.1-1"/>
    <property type="match status" value="1"/>
</dbReference>
<dbReference type="Pfam" id="PF02313">
    <property type="entry name" value="Fumarate_red_D"/>
    <property type="match status" value="1"/>
</dbReference>
<dbReference type="PIRSF" id="PIRSF000179">
    <property type="entry name" value="FrdD"/>
    <property type="match status" value="1"/>
</dbReference>
<dbReference type="SUPFAM" id="SSF81343">
    <property type="entry name" value="Fumarate reductase respiratory complex transmembrane subunits"/>
    <property type="match status" value="1"/>
</dbReference>
<gene>
    <name evidence="1" type="primary">frdD</name>
    <name type="ordered locus">SSON_4337</name>
</gene>
<reference key="1">
    <citation type="journal article" date="2005" name="Nucleic Acids Res.">
        <title>Genome dynamics and diversity of Shigella species, the etiologic agents of bacillary dysentery.</title>
        <authorList>
            <person name="Yang F."/>
            <person name="Yang J."/>
            <person name="Zhang X."/>
            <person name="Chen L."/>
            <person name="Jiang Y."/>
            <person name="Yan Y."/>
            <person name="Tang X."/>
            <person name="Wang J."/>
            <person name="Xiong Z."/>
            <person name="Dong J."/>
            <person name="Xue Y."/>
            <person name="Zhu Y."/>
            <person name="Xu X."/>
            <person name="Sun L."/>
            <person name="Chen S."/>
            <person name="Nie H."/>
            <person name="Peng J."/>
            <person name="Xu J."/>
            <person name="Wang Y."/>
            <person name="Yuan Z."/>
            <person name="Wen Y."/>
            <person name="Yao Z."/>
            <person name="Shen Y."/>
            <person name="Qiang B."/>
            <person name="Hou Y."/>
            <person name="Yu J."/>
            <person name="Jin Q."/>
        </authorList>
    </citation>
    <scope>NUCLEOTIDE SEQUENCE [LARGE SCALE GENOMIC DNA]</scope>
    <source>
        <strain>Ss046</strain>
    </source>
</reference>
<protein>
    <recommendedName>
        <fullName evidence="1">Fumarate reductase subunit D</fullName>
    </recommendedName>
    <alternativeName>
        <fullName evidence="1">Fumarate reductase 13 kDa hydrophobic protein</fullName>
    </alternativeName>
    <alternativeName>
        <fullName evidence="1">Quinol-fumarate reductase subunit D</fullName>
        <shortName evidence="1">QFR subunit D</shortName>
    </alternativeName>
</protein>
<accession>Q3YUI7</accession>
<proteinExistence type="inferred from homology"/>